<organism>
    <name type="scientific">Escherichia coli (strain K12 / MC4100 / BW2952)</name>
    <dbReference type="NCBI Taxonomy" id="595496"/>
    <lineage>
        <taxon>Bacteria</taxon>
        <taxon>Pseudomonadati</taxon>
        <taxon>Pseudomonadota</taxon>
        <taxon>Gammaproteobacteria</taxon>
        <taxon>Enterobacterales</taxon>
        <taxon>Enterobacteriaceae</taxon>
        <taxon>Escherichia</taxon>
    </lineage>
</organism>
<reference key="1">
    <citation type="journal article" date="2009" name="J. Bacteriol.">
        <title>Genomic sequencing reveals regulatory mutations and recombinational events in the widely used MC4100 lineage of Escherichia coli K-12.</title>
        <authorList>
            <person name="Ferenci T."/>
            <person name="Zhou Z."/>
            <person name="Betteridge T."/>
            <person name="Ren Y."/>
            <person name="Liu Y."/>
            <person name="Feng L."/>
            <person name="Reeves P.R."/>
            <person name="Wang L."/>
        </authorList>
    </citation>
    <scope>NUCLEOTIDE SEQUENCE [LARGE SCALE GENOMIC DNA]</scope>
    <source>
        <strain>K12 / MC4100 / BW2952</strain>
    </source>
</reference>
<comment type="function">
    <text evidence="1">Plays a role in cell envelope biogenesis, maintenance of cell envelope integrity and membrane homeostasis.</text>
</comment>
<comment type="subcellular location">
    <subcellularLocation>
        <location evidence="1">Cell inner membrane</location>
        <topology evidence="1">Multi-pass membrane protein</topology>
    </subcellularLocation>
</comment>
<comment type="similarity">
    <text evidence="1">Belongs to the YciB family.</text>
</comment>
<feature type="chain" id="PRO_1000203985" description="Inner membrane-spanning protein YciB">
    <location>
        <begin position="1"/>
        <end position="179"/>
    </location>
</feature>
<feature type="transmembrane region" description="Helical" evidence="1">
    <location>
        <begin position="22"/>
        <end position="42"/>
    </location>
</feature>
<feature type="transmembrane region" description="Helical" evidence="1">
    <location>
        <begin position="50"/>
        <end position="70"/>
    </location>
</feature>
<feature type="transmembrane region" description="Helical" evidence="1">
    <location>
        <begin position="76"/>
        <end position="96"/>
    </location>
</feature>
<feature type="transmembrane region" description="Helical" evidence="1">
    <location>
        <begin position="121"/>
        <end position="141"/>
    </location>
</feature>
<feature type="transmembrane region" description="Helical" evidence="1">
    <location>
        <begin position="149"/>
        <end position="169"/>
    </location>
</feature>
<name>YCIB_ECOBW</name>
<sequence>MKQFLDFLPLVVFFAFYKIYDIYAATAALIVATAIVLIYSWVRFRKVEKMALITFVLVVVFGGLTLFFHNDEFIKWKVTVIYALFAGALLVSQWVMKKPLIQRMLGKELTLPQPVWSKLNLAWAVFFILCGLANIYIAFWLPQNIWVNFKVFGLTALTLIFTLLSGIYIYRHMPQEDKS</sequence>
<dbReference type="EMBL" id="CP001396">
    <property type="protein sequence ID" value="ACR64501.1"/>
    <property type="molecule type" value="Genomic_DNA"/>
</dbReference>
<dbReference type="RefSeq" id="WP_000808667.1">
    <property type="nucleotide sequence ID" value="NC_012759.1"/>
</dbReference>
<dbReference type="KEGG" id="ebw:BWG_1083"/>
<dbReference type="HOGENOM" id="CLU_089554_2_0_6"/>
<dbReference type="GO" id="GO:0005886">
    <property type="term" value="C:plasma membrane"/>
    <property type="evidence" value="ECO:0007669"/>
    <property type="project" value="UniProtKB-SubCell"/>
</dbReference>
<dbReference type="HAMAP" id="MF_00189">
    <property type="entry name" value="YciB"/>
    <property type="match status" value="1"/>
</dbReference>
<dbReference type="InterPro" id="IPR006008">
    <property type="entry name" value="YciB"/>
</dbReference>
<dbReference type="NCBIfam" id="TIGR00997">
    <property type="entry name" value="ispZ"/>
    <property type="match status" value="1"/>
</dbReference>
<dbReference type="NCBIfam" id="NF001324">
    <property type="entry name" value="PRK00259.1-2"/>
    <property type="match status" value="1"/>
</dbReference>
<dbReference type="NCBIfam" id="NF001325">
    <property type="entry name" value="PRK00259.1-3"/>
    <property type="match status" value="1"/>
</dbReference>
<dbReference type="NCBIfam" id="NF001326">
    <property type="entry name" value="PRK00259.1-4"/>
    <property type="match status" value="1"/>
</dbReference>
<dbReference type="PANTHER" id="PTHR36917:SF1">
    <property type="entry name" value="INNER MEMBRANE-SPANNING PROTEIN YCIB"/>
    <property type="match status" value="1"/>
</dbReference>
<dbReference type="PANTHER" id="PTHR36917">
    <property type="entry name" value="INTRACELLULAR SEPTATION PROTEIN A-RELATED"/>
    <property type="match status" value="1"/>
</dbReference>
<dbReference type="Pfam" id="PF04279">
    <property type="entry name" value="IspA"/>
    <property type="match status" value="1"/>
</dbReference>
<evidence type="ECO:0000255" key="1">
    <source>
        <dbReference type="HAMAP-Rule" id="MF_00189"/>
    </source>
</evidence>
<protein>
    <recommendedName>
        <fullName evidence="1">Inner membrane-spanning protein YciB</fullName>
    </recommendedName>
</protein>
<gene>
    <name evidence="1" type="primary">yciB</name>
    <name type="ordered locus">BWG_1083</name>
</gene>
<keyword id="KW-0997">Cell inner membrane</keyword>
<keyword id="KW-1003">Cell membrane</keyword>
<keyword id="KW-0472">Membrane</keyword>
<keyword id="KW-0812">Transmembrane</keyword>
<keyword id="KW-1133">Transmembrane helix</keyword>
<proteinExistence type="inferred from homology"/>
<accession>C4ZTU7</accession>